<proteinExistence type="inferred from homology"/>
<protein>
    <recommendedName>
        <fullName>Islet amyloid polypeptide</fullName>
        <shortName>IAPP</shortName>
    </recommendedName>
    <alternativeName>
        <fullName>Amylin</fullName>
    </alternativeName>
</protein>
<sequence>MCLLQLPVVLLLLSAALNTLKATPIASDTDHRVDKRKCNTATCATQRLTNFLVRSSHNLGAALPPTKVGSNTYGRRNAEVVDVELLHYLPL</sequence>
<evidence type="ECO:0000250" key="1"/>
<evidence type="ECO:0000250" key="2">
    <source>
        <dbReference type="UniProtKB" id="P10997"/>
    </source>
</evidence>
<evidence type="ECO:0000250" key="3">
    <source>
        <dbReference type="UniProtKB" id="P12969"/>
    </source>
</evidence>
<evidence type="ECO:0000255" key="4"/>
<evidence type="ECO:0000305" key="5"/>
<organism>
    <name type="scientific">Octodon degus</name>
    <name type="common">Degu</name>
    <name type="synonym">Sciurus degus</name>
    <dbReference type="NCBI Taxonomy" id="10160"/>
    <lineage>
        <taxon>Eukaryota</taxon>
        <taxon>Metazoa</taxon>
        <taxon>Chordata</taxon>
        <taxon>Craniata</taxon>
        <taxon>Vertebrata</taxon>
        <taxon>Euteleostomi</taxon>
        <taxon>Mammalia</taxon>
        <taxon>Eutheria</taxon>
        <taxon>Euarchontoglires</taxon>
        <taxon>Glires</taxon>
        <taxon>Rodentia</taxon>
        <taxon>Hystricomorpha</taxon>
        <taxon>Octodontidae</taxon>
        <taxon>Octodon</taxon>
    </lineage>
</organism>
<accession>P22889</accession>
<reference key="1">
    <citation type="journal article" date="1990" name="Mol. Endocrinol.">
        <title>Cloning of complementary DNAs encoding islet amyloid polypeptide, insulin, and glucagon precursors from a New World rodent, the degu, Octodon degus.</title>
        <authorList>
            <person name="Nishi M."/>
            <person name="Steiner D.F."/>
        </authorList>
    </citation>
    <scope>NUCLEOTIDE SEQUENCE [MRNA]</scope>
</reference>
<keyword id="KW-0027">Amidation</keyword>
<keyword id="KW-0034">Amyloid</keyword>
<keyword id="KW-0165">Cleavage on pair of basic residues</keyword>
<keyword id="KW-1015">Disulfide bond</keyword>
<keyword id="KW-0372">Hormone</keyword>
<keyword id="KW-1185">Reference proteome</keyword>
<keyword id="KW-0964">Secreted</keyword>
<keyword id="KW-0732">Signal</keyword>
<dbReference type="EMBL" id="M57669">
    <property type="protein sequence ID" value="AAA40589.1"/>
    <property type="molecule type" value="mRNA"/>
</dbReference>
<dbReference type="PIR" id="A36118">
    <property type="entry name" value="A36118"/>
</dbReference>
<dbReference type="RefSeq" id="NP_001267801.1">
    <property type="nucleotide sequence ID" value="NM_001280872.1"/>
</dbReference>
<dbReference type="SMR" id="P22889"/>
<dbReference type="FunCoup" id="P22889">
    <property type="interactions" value="330"/>
</dbReference>
<dbReference type="Ensembl" id="ENSODET00000012172">
    <property type="protein sequence ID" value="ENSODEP00000012008"/>
    <property type="gene ID" value="ENSODEG00000008908"/>
</dbReference>
<dbReference type="GeneID" id="101563275"/>
<dbReference type="CTD" id="3375"/>
<dbReference type="InParanoid" id="P22889"/>
<dbReference type="OMA" id="CATQRLT"/>
<dbReference type="OrthoDB" id="9898100at2759"/>
<dbReference type="Proteomes" id="UP000515203">
    <property type="component" value="Unplaced"/>
</dbReference>
<dbReference type="GO" id="GO:0005615">
    <property type="term" value="C:extracellular space"/>
    <property type="evidence" value="ECO:0007669"/>
    <property type="project" value="Ensembl"/>
</dbReference>
<dbReference type="GO" id="GO:0043025">
    <property type="term" value="C:neuronal cell body"/>
    <property type="evidence" value="ECO:0007669"/>
    <property type="project" value="Ensembl"/>
</dbReference>
<dbReference type="GO" id="GO:0005179">
    <property type="term" value="F:hormone activity"/>
    <property type="evidence" value="ECO:0000250"/>
    <property type="project" value="UniProtKB"/>
</dbReference>
<dbReference type="GO" id="GO:0042802">
    <property type="term" value="F:identical protein binding"/>
    <property type="evidence" value="ECO:0007669"/>
    <property type="project" value="Ensembl"/>
</dbReference>
<dbReference type="GO" id="GO:0048018">
    <property type="term" value="F:receptor ligand activity"/>
    <property type="evidence" value="ECO:0000250"/>
    <property type="project" value="UniProtKB"/>
</dbReference>
<dbReference type="GO" id="GO:0150059">
    <property type="term" value="P:amylin receptor 1 signaling pathway"/>
    <property type="evidence" value="ECO:0007669"/>
    <property type="project" value="Ensembl"/>
</dbReference>
<dbReference type="GO" id="GO:0150060">
    <property type="term" value="P:amylin receptor 2 signaling pathway"/>
    <property type="evidence" value="ECO:0007669"/>
    <property type="project" value="Ensembl"/>
</dbReference>
<dbReference type="GO" id="GO:0150061">
    <property type="term" value="P:amylin receptor 3 signaling pathway"/>
    <property type="evidence" value="ECO:0007669"/>
    <property type="project" value="Ensembl"/>
</dbReference>
<dbReference type="GO" id="GO:0097647">
    <property type="term" value="P:amylin receptor signaling pathway"/>
    <property type="evidence" value="ECO:0000250"/>
    <property type="project" value="UniProtKB"/>
</dbReference>
<dbReference type="GO" id="GO:0045453">
    <property type="term" value="P:bone resorption"/>
    <property type="evidence" value="ECO:0007669"/>
    <property type="project" value="Ensembl"/>
</dbReference>
<dbReference type="GO" id="GO:0045779">
    <property type="term" value="P:negative regulation of bone resorption"/>
    <property type="evidence" value="ECO:0007669"/>
    <property type="project" value="Ensembl"/>
</dbReference>
<dbReference type="GO" id="GO:0045671">
    <property type="term" value="P:negative regulation of osteoclast differentiation"/>
    <property type="evidence" value="ECO:0007669"/>
    <property type="project" value="Ensembl"/>
</dbReference>
<dbReference type="GO" id="GO:0030316">
    <property type="term" value="P:osteoclast differentiation"/>
    <property type="evidence" value="ECO:0007669"/>
    <property type="project" value="Ensembl"/>
</dbReference>
<dbReference type="GO" id="GO:0050850">
    <property type="term" value="P:positive regulation of calcium-mediated signaling"/>
    <property type="evidence" value="ECO:0007669"/>
    <property type="project" value="Ensembl"/>
</dbReference>
<dbReference type="GO" id="GO:0141163">
    <property type="term" value="P:positive regulation of cAMP/PKA signal transduction"/>
    <property type="evidence" value="ECO:0007669"/>
    <property type="project" value="Ensembl"/>
</dbReference>
<dbReference type="GO" id="GO:0019233">
    <property type="term" value="P:sensory perception of pain"/>
    <property type="evidence" value="ECO:0007669"/>
    <property type="project" value="Ensembl"/>
</dbReference>
<dbReference type="Gene3D" id="6.10.250.2190">
    <property type="match status" value="1"/>
</dbReference>
<dbReference type="InterPro" id="IPR021117">
    <property type="entry name" value="Calcitonin-like"/>
</dbReference>
<dbReference type="InterPro" id="IPR021116">
    <property type="entry name" value="Calcitonin/adrenomedullin"/>
</dbReference>
<dbReference type="InterPro" id="IPR018360">
    <property type="entry name" value="Calcitonin_CS"/>
</dbReference>
<dbReference type="InterPro" id="IPR001693">
    <property type="entry name" value="Calcitonin_peptide-like"/>
</dbReference>
<dbReference type="InterPro" id="IPR000443">
    <property type="entry name" value="IAPP"/>
</dbReference>
<dbReference type="PANTHER" id="PTHR10505">
    <property type="entry name" value="CALCITONIN-RELATED"/>
    <property type="match status" value="1"/>
</dbReference>
<dbReference type="PANTHER" id="PTHR10505:SF4">
    <property type="entry name" value="ISLET AMYLOID POLYPEPTIDE"/>
    <property type="match status" value="1"/>
</dbReference>
<dbReference type="Pfam" id="PF00214">
    <property type="entry name" value="Calc_CGRP_IAPP"/>
    <property type="match status" value="1"/>
</dbReference>
<dbReference type="PRINTS" id="PR00818">
    <property type="entry name" value="ISLETAMYLOID"/>
</dbReference>
<dbReference type="SMART" id="SM00113">
    <property type="entry name" value="CALCITONIN"/>
    <property type="match status" value="1"/>
</dbReference>
<dbReference type="PROSITE" id="PS00258">
    <property type="entry name" value="CALCITONIN"/>
    <property type="match status" value="1"/>
</dbReference>
<feature type="signal peptide" evidence="4">
    <location>
        <begin position="1"/>
        <end position="22"/>
    </location>
</feature>
<feature type="propeptide" id="PRO_0000004115" evidence="1">
    <location>
        <begin position="23"/>
        <end position="34"/>
    </location>
</feature>
<feature type="peptide" id="PRO_0000004116" description="Islet amyloid polypeptide">
    <location>
        <begin position="37"/>
        <end position="73"/>
    </location>
</feature>
<feature type="propeptide" id="PRO_0000004117" evidence="1">
    <location>
        <begin position="77"/>
        <end position="91"/>
    </location>
</feature>
<feature type="modified residue" description="Tyrosine amide" evidence="1">
    <location>
        <position position="73"/>
    </location>
</feature>
<feature type="disulfide bond" evidence="3">
    <location>
        <begin position="38"/>
        <end position="43"/>
    </location>
</feature>
<name>IAPP_OCTDE</name>
<gene>
    <name type="primary">IAPP</name>
</gene>
<comment type="function">
    <text evidence="2 3">Amylin/IAPP is a glucoregulatory peptide hormone that plays an important role in the regulation of energy homeostasis (By similarity). Selectively inhibits insulin-stimulated glucose utilization and glycogen deposition in muscle, while not affecting adipocyte glucose metabolism. IAPP function is mediated by the CALCR-RAMPs (AMYRs) receptor complexes. Amylin can also bind CALCR receptor in the absence of RAMPs, although it is more selective for AMYRs (By similarity).</text>
</comment>
<comment type="subunit">
    <text evidence="2 3">Can form homodimers. Interacts with IDE and INS. Interaction with INS inhibits homodimerization and fibril formation (By similarity).</text>
</comment>
<comment type="subcellular location">
    <subcellularLocation>
        <location evidence="2">Secreted</location>
    </subcellularLocation>
</comment>
<comment type="domain">
    <text evidence="1">The mature protein is largely unstructured in the absence of a cognate ligand.</text>
</comment>
<comment type="similarity">
    <text evidence="5">Belongs to the calcitonin family.</text>
</comment>